<organism>
    <name type="scientific">Homo sapiens</name>
    <name type="common">Human</name>
    <dbReference type="NCBI Taxonomy" id="9606"/>
    <lineage>
        <taxon>Eukaryota</taxon>
        <taxon>Metazoa</taxon>
        <taxon>Chordata</taxon>
        <taxon>Craniata</taxon>
        <taxon>Vertebrata</taxon>
        <taxon>Euteleostomi</taxon>
        <taxon>Mammalia</taxon>
        <taxon>Eutheria</taxon>
        <taxon>Euarchontoglires</taxon>
        <taxon>Primates</taxon>
        <taxon>Haplorrhini</taxon>
        <taxon>Catarrhini</taxon>
        <taxon>Hominidae</taxon>
        <taxon>Homo</taxon>
    </lineage>
</organism>
<protein>
    <recommendedName>
        <fullName>Homeobox protein Meis3</fullName>
    </recommendedName>
    <alternativeName>
        <fullName>Meis1-related protein 2</fullName>
    </alternativeName>
</protein>
<dbReference type="EMBL" id="AK289950">
    <property type="protein sequence ID" value="BAF82639.1"/>
    <property type="molecule type" value="mRNA"/>
</dbReference>
<dbReference type="EMBL" id="AL359938">
    <property type="protein sequence ID" value="CAB95771.1"/>
    <property type="molecule type" value="mRNA"/>
</dbReference>
<dbReference type="EMBL" id="CR749687">
    <property type="protein sequence ID" value="CAH18472.1"/>
    <property type="molecule type" value="mRNA"/>
</dbReference>
<dbReference type="EMBL" id="CH471126">
    <property type="protein sequence ID" value="EAW57482.1"/>
    <property type="molecule type" value="Genomic_DNA"/>
</dbReference>
<dbReference type="EMBL" id="BC025404">
    <property type="protein sequence ID" value="AAH25404.1"/>
    <property type="molecule type" value="mRNA"/>
</dbReference>
<dbReference type="EMBL" id="BC069251">
    <property type="protein sequence ID" value="AAH69251.1"/>
    <property type="molecule type" value="mRNA"/>
</dbReference>
<dbReference type="EMBL" id="U68385">
    <property type="protein sequence ID" value="AAB19195.1"/>
    <property type="molecule type" value="mRNA"/>
</dbReference>
<dbReference type="CCDS" id="CCDS33064.1">
    <molecule id="Q99687-2"/>
</dbReference>
<dbReference type="CCDS" id="CCDS46132.1">
    <molecule id="Q99687-3"/>
</dbReference>
<dbReference type="CCDS" id="CCDS74406.1">
    <molecule id="Q99687-1"/>
</dbReference>
<dbReference type="RefSeq" id="NP_001009813.1">
    <molecule id="Q99687-3"/>
    <property type="nucleotide sequence ID" value="NM_001009813.3"/>
</dbReference>
<dbReference type="RefSeq" id="NP_001287988.1">
    <molecule id="Q99687-1"/>
    <property type="nucleotide sequence ID" value="NM_001301059.2"/>
</dbReference>
<dbReference type="RefSeq" id="NP_064545.1">
    <molecule id="Q99687-2"/>
    <property type="nucleotide sequence ID" value="NM_020160.3"/>
</dbReference>
<dbReference type="SMR" id="Q99687"/>
<dbReference type="BioGRID" id="121245">
    <property type="interactions" value="26"/>
</dbReference>
<dbReference type="FunCoup" id="Q99687">
    <property type="interactions" value="93"/>
</dbReference>
<dbReference type="IntAct" id="Q99687">
    <property type="interactions" value="23"/>
</dbReference>
<dbReference type="STRING" id="9606.ENSP00000453307"/>
<dbReference type="iPTMnet" id="Q99687"/>
<dbReference type="PhosphoSitePlus" id="Q99687"/>
<dbReference type="BioMuta" id="MEIS3"/>
<dbReference type="DMDM" id="59803105"/>
<dbReference type="jPOST" id="Q99687"/>
<dbReference type="MassIVE" id="Q99687"/>
<dbReference type="PeptideAtlas" id="Q99687"/>
<dbReference type="ProteomicsDB" id="78398">
    <molecule id="Q99687-1"/>
</dbReference>
<dbReference type="ProteomicsDB" id="78399">
    <molecule id="Q99687-2"/>
</dbReference>
<dbReference type="ProteomicsDB" id="78400">
    <molecule id="Q99687-3"/>
</dbReference>
<dbReference type="Pumba" id="Q99687"/>
<dbReference type="Antibodypedia" id="31559">
    <property type="antibodies" value="438 antibodies from 25 providers"/>
</dbReference>
<dbReference type="DNASU" id="56917"/>
<dbReference type="Ensembl" id="ENST00000441740.6">
    <molecule id="Q99687-3"/>
    <property type="protein sequence ID" value="ENSP00000388667.2"/>
    <property type="gene ID" value="ENSG00000105419.18"/>
</dbReference>
<dbReference type="Ensembl" id="ENST00000558555.6">
    <molecule id="Q99687-1"/>
    <property type="protein sequence ID" value="ENSP00000454073.1"/>
    <property type="gene ID" value="ENSG00000105419.18"/>
</dbReference>
<dbReference type="Ensembl" id="ENST00000559524.5">
    <molecule id="Q99687-2"/>
    <property type="protein sequence ID" value="ENSP00000452854.1"/>
    <property type="gene ID" value="ENSG00000105419.18"/>
</dbReference>
<dbReference type="Ensembl" id="ENST00000561293.5">
    <molecule id="Q99687-2"/>
    <property type="protein sequence ID" value="ENSP00000453307.1"/>
    <property type="gene ID" value="ENSG00000105419.18"/>
</dbReference>
<dbReference type="GeneID" id="56917"/>
<dbReference type="KEGG" id="hsa:56917"/>
<dbReference type="MANE-Select" id="ENST00000558555.6">
    <property type="protein sequence ID" value="ENSP00000454073.1"/>
    <property type="RefSeq nucleotide sequence ID" value="NM_001301059.2"/>
    <property type="RefSeq protein sequence ID" value="NP_001287988.1"/>
</dbReference>
<dbReference type="UCSC" id="uc002pgs.5">
    <molecule id="Q99687-1"/>
    <property type="organism name" value="human"/>
</dbReference>
<dbReference type="AGR" id="HGNC:29537"/>
<dbReference type="CTD" id="56917"/>
<dbReference type="DisGeNET" id="56917"/>
<dbReference type="GeneCards" id="MEIS3"/>
<dbReference type="HGNC" id="HGNC:29537">
    <property type="gene designation" value="MEIS3"/>
</dbReference>
<dbReference type="HPA" id="ENSG00000105419">
    <property type="expression patterns" value="Tissue enhanced (brain, endometrium)"/>
</dbReference>
<dbReference type="MIM" id="619443">
    <property type="type" value="gene"/>
</dbReference>
<dbReference type="neXtProt" id="NX_Q99687"/>
<dbReference type="OpenTargets" id="ENSG00000105419"/>
<dbReference type="PharmGKB" id="PA30742"/>
<dbReference type="VEuPathDB" id="HostDB:ENSG00000105419"/>
<dbReference type="GeneTree" id="ENSGT00940000161057"/>
<dbReference type="HOGENOM" id="CLU_023139_1_1_1"/>
<dbReference type="InParanoid" id="Q99687"/>
<dbReference type="OMA" id="MEGEWHY"/>
<dbReference type="OrthoDB" id="10056939at2759"/>
<dbReference type="PAN-GO" id="Q99687">
    <property type="GO annotations" value="8 GO annotations based on evolutionary models"/>
</dbReference>
<dbReference type="PhylomeDB" id="Q99687"/>
<dbReference type="TreeFam" id="TF318093"/>
<dbReference type="PathwayCommons" id="Q99687"/>
<dbReference type="SignaLink" id="Q99687"/>
<dbReference type="BioGRID-ORCS" id="56917">
    <property type="hits" value="30 hits in 1169 CRISPR screens"/>
</dbReference>
<dbReference type="ChiTaRS" id="MEIS3">
    <property type="organism name" value="human"/>
</dbReference>
<dbReference type="GenomeRNAi" id="56917"/>
<dbReference type="Pharos" id="Q99687">
    <property type="development level" value="Tbio"/>
</dbReference>
<dbReference type="PRO" id="PR:Q99687"/>
<dbReference type="Proteomes" id="UP000005640">
    <property type="component" value="Chromosome 19"/>
</dbReference>
<dbReference type="RNAct" id="Q99687">
    <property type="molecule type" value="protein"/>
</dbReference>
<dbReference type="Bgee" id="ENSG00000105419">
    <property type="expression patterns" value="Expressed in body of uterus and 106 other cell types or tissues"/>
</dbReference>
<dbReference type="ExpressionAtlas" id="Q99687">
    <property type="expression patterns" value="baseline and differential"/>
</dbReference>
<dbReference type="GO" id="GO:0000785">
    <property type="term" value="C:chromatin"/>
    <property type="evidence" value="ECO:0000247"/>
    <property type="project" value="NTNU_SB"/>
</dbReference>
<dbReference type="GO" id="GO:0005634">
    <property type="term" value="C:nucleus"/>
    <property type="evidence" value="ECO:0007669"/>
    <property type="project" value="UniProtKB-SubCell"/>
</dbReference>
<dbReference type="GO" id="GO:0001228">
    <property type="term" value="F:DNA-binding transcription activator activity, RNA polymerase II-specific"/>
    <property type="evidence" value="ECO:0000318"/>
    <property type="project" value="GO_Central"/>
</dbReference>
<dbReference type="GO" id="GO:0000981">
    <property type="term" value="F:DNA-binding transcription factor activity, RNA polymerase II-specific"/>
    <property type="evidence" value="ECO:0000247"/>
    <property type="project" value="NTNU_SB"/>
</dbReference>
<dbReference type="GO" id="GO:0043565">
    <property type="term" value="F:sequence-specific DNA binding"/>
    <property type="evidence" value="ECO:0000314"/>
    <property type="project" value="MGI"/>
</dbReference>
<dbReference type="GO" id="GO:1990837">
    <property type="term" value="F:sequence-specific double-stranded DNA binding"/>
    <property type="evidence" value="ECO:0000314"/>
    <property type="project" value="ARUK-UCL"/>
</dbReference>
<dbReference type="GO" id="GO:0001525">
    <property type="term" value="P:angiogenesis"/>
    <property type="evidence" value="ECO:0000318"/>
    <property type="project" value="GO_Central"/>
</dbReference>
<dbReference type="GO" id="GO:0009887">
    <property type="term" value="P:animal organ morphogenesis"/>
    <property type="evidence" value="ECO:0000318"/>
    <property type="project" value="GO_Central"/>
</dbReference>
<dbReference type="GO" id="GO:0007420">
    <property type="term" value="P:brain development"/>
    <property type="evidence" value="ECO:0000318"/>
    <property type="project" value="GO_Central"/>
</dbReference>
<dbReference type="GO" id="GO:0009880">
    <property type="term" value="P:embryonic pattern specification"/>
    <property type="evidence" value="ECO:0000318"/>
    <property type="project" value="GO_Central"/>
</dbReference>
<dbReference type="GO" id="GO:0001654">
    <property type="term" value="P:eye development"/>
    <property type="evidence" value="ECO:0000318"/>
    <property type="project" value="GO_Central"/>
</dbReference>
<dbReference type="GO" id="GO:0030097">
    <property type="term" value="P:hemopoiesis"/>
    <property type="evidence" value="ECO:0000318"/>
    <property type="project" value="GO_Central"/>
</dbReference>
<dbReference type="GO" id="GO:0008284">
    <property type="term" value="P:positive regulation of cell population proliferation"/>
    <property type="evidence" value="ECO:0000318"/>
    <property type="project" value="GO_Central"/>
</dbReference>
<dbReference type="GO" id="GO:0045944">
    <property type="term" value="P:positive regulation of transcription by RNA polymerase II"/>
    <property type="evidence" value="ECO:0000318"/>
    <property type="project" value="GO_Central"/>
</dbReference>
<dbReference type="CDD" id="cd00086">
    <property type="entry name" value="homeodomain"/>
    <property type="match status" value="1"/>
</dbReference>
<dbReference type="FunFam" id="1.10.10.60:FF:000004">
    <property type="entry name" value="Meis2 homeobox isoform 2c"/>
    <property type="match status" value="1"/>
</dbReference>
<dbReference type="Gene3D" id="1.10.10.60">
    <property type="entry name" value="Homeodomain-like"/>
    <property type="match status" value="1"/>
</dbReference>
<dbReference type="InterPro" id="IPR001356">
    <property type="entry name" value="HD"/>
</dbReference>
<dbReference type="InterPro" id="IPR009057">
    <property type="entry name" value="Homeodomain-like_sf"/>
</dbReference>
<dbReference type="InterPro" id="IPR008422">
    <property type="entry name" value="KN_HD"/>
</dbReference>
<dbReference type="InterPro" id="IPR032453">
    <property type="entry name" value="PKNOX/Meis_N"/>
</dbReference>
<dbReference type="InterPro" id="IPR050224">
    <property type="entry name" value="TALE_homeobox"/>
</dbReference>
<dbReference type="PANTHER" id="PTHR11850">
    <property type="entry name" value="HOMEOBOX PROTEIN TRANSCRIPTION FACTORS"/>
    <property type="match status" value="1"/>
</dbReference>
<dbReference type="Pfam" id="PF05920">
    <property type="entry name" value="Homeobox_KN"/>
    <property type="match status" value="1"/>
</dbReference>
<dbReference type="Pfam" id="PF16493">
    <property type="entry name" value="Meis_PKNOX_N"/>
    <property type="match status" value="1"/>
</dbReference>
<dbReference type="SMART" id="SM00389">
    <property type="entry name" value="HOX"/>
    <property type="match status" value="1"/>
</dbReference>
<dbReference type="SUPFAM" id="SSF46689">
    <property type="entry name" value="Homeodomain-like"/>
    <property type="match status" value="1"/>
</dbReference>
<dbReference type="PROSITE" id="PS50071">
    <property type="entry name" value="HOMEOBOX_2"/>
    <property type="match status" value="1"/>
</dbReference>
<feature type="chain" id="PRO_0000049110" description="Homeobox protein Meis3">
    <location>
        <begin position="1"/>
        <end position="375"/>
    </location>
</feature>
<feature type="domain" description="MEIS N-terminal" evidence="2">
    <location>
        <begin position="96"/>
        <end position="179"/>
    </location>
</feature>
<feature type="DNA-binding region" description="Homeobox; TALE-type" evidence="3">
    <location>
        <begin position="262"/>
        <end position="324"/>
    </location>
</feature>
<feature type="region of interest" description="Disordered" evidence="4">
    <location>
        <begin position="25"/>
        <end position="51"/>
    </location>
</feature>
<feature type="region of interest" description="Disordered" evidence="4">
    <location>
        <begin position="197"/>
        <end position="268"/>
    </location>
</feature>
<feature type="region of interest" description="Disordered" evidence="4">
    <location>
        <begin position="329"/>
        <end position="348"/>
    </location>
</feature>
<feature type="compositionally biased region" description="Pro residues" evidence="4">
    <location>
        <begin position="31"/>
        <end position="46"/>
    </location>
</feature>
<feature type="compositionally biased region" description="Low complexity" evidence="4">
    <location>
        <begin position="227"/>
        <end position="241"/>
    </location>
</feature>
<feature type="splice variant" id="VSP_012892" description="In isoform 3." evidence="6">
    <location>
        <begin position="150"/>
        <end position="166"/>
    </location>
</feature>
<feature type="splice variant" id="VSP_012893" description="In isoform 2." evidence="5 6">
    <original>S</original>
    <variation>SRRSEAPVLPDVCLGLGSPSPGPRWARPWGSDCGRPGRQSDSCWWLQ</variation>
    <location>
        <position position="286"/>
    </location>
</feature>
<feature type="sequence conflict" description="In Ref. 2; CAB95771/CAH18472." evidence="7" ref="2">
    <original>MARR</original>
    <variation>LASQ</variation>
    <location>
        <begin position="1"/>
        <end position="4"/>
    </location>
</feature>
<feature type="sequence conflict" description="In Ref. 5." evidence="7" ref="5">
    <original>KM</original>
    <variation>RP</variation>
    <location>
        <begin position="168"/>
        <end position="169"/>
    </location>
</feature>
<feature type="sequence conflict" description="In Ref. 5." evidence="7" ref="5">
    <original>M</original>
    <variation>I</variation>
    <location>
        <position position="202"/>
    </location>
</feature>
<feature type="sequence conflict" description="In Ref. 5." evidence="7" ref="5">
    <original>D</original>
    <variation>V</variation>
    <location>
        <position position="238"/>
    </location>
</feature>
<feature type="sequence conflict" description="In Ref. 5." evidence="7" ref="5">
    <original>R</original>
    <variation>P</variation>
    <location>
        <position position="260"/>
    </location>
</feature>
<feature type="sequence conflict" description="In Ref. 5." evidence="7" ref="5">
    <original>Q</original>
    <variation>E</variation>
    <location>
        <position position="351"/>
    </location>
</feature>
<feature type="sequence conflict" description="In Ref. 5." evidence="7" ref="5">
    <original>VRPPG</original>
    <variation>FRAPA</variation>
    <location>
        <begin position="356"/>
        <end position="360"/>
    </location>
</feature>
<feature type="sequence conflict" description="In Ref. 5." evidence="7" ref="5">
    <original>MSLNLEG</original>
    <variation>DEFGTRKE</variation>
    <location>
        <begin position="364"/>
        <end position="370"/>
    </location>
</feature>
<sequence>MARRYDELPHYPGIVDGPAALASFPETVPAVPGPYGPHRPPQPLPPGLDSDGLKREKDEIYGHPLFPLLALVFEKCELATCSPRDGAGAGLGTPPGGDVCSSDSFNEDIAAFAKQVRSERPLFSSNPELDNLMIQAIQVLRFHLLELEKVHDLCDNFCHRYITCLKGKMPIDLVIEDRDGGCREDFEDYPASCPSLPDQNNMWIRDHEDSGSVHLGTPGPSSGGLASQSGDNSSDQGDGLDTSVASPSSGGEDEDLDQERRRNKKRGIFPKVATNIMRAWLFQHLSHPYPSEEQKKQLAQDTGLTILQVNNWFINARRRIVQPMIDQSNRTGQGAAFSPEGQPIGGYTETQPHVAVRPPGSVGMSLNLEGEWHYL</sequence>
<evidence type="ECO:0000250" key="1">
    <source>
        <dbReference type="UniProtKB" id="P97368"/>
    </source>
</evidence>
<evidence type="ECO:0000255" key="2"/>
<evidence type="ECO:0000255" key="3">
    <source>
        <dbReference type="PROSITE-ProRule" id="PRU00108"/>
    </source>
</evidence>
<evidence type="ECO:0000256" key="4">
    <source>
        <dbReference type="SAM" id="MobiDB-lite"/>
    </source>
</evidence>
<evidence type="ECO:0000303" key="5">
    <source>
    </source>
</evidence>
<evidence type="ECO:0000303" key="6">
    <source>
    </source>
</evidence>
<evidence type="ECO:0000305" key="7"/>
<accession>Q99687</accession>
<accession>A8K1N5</accession>
<accession>Q6NT73</accession>
<accession>Q8TC66</accession>
<accession>Q9NPW2</accession>
<keyword id="KW-0025">Alternative splicing</keyword>
<keyword id="KW-0238">DNA-binding</keyword>
<keyword id="KW-0371">Homeobox</keyword>
<keyword id="KW-0539">Nucleus</keyword>
<keyword id="KW-1267">Proteomics identification</keyword>
<keyword id="KW-1185">Reference proteome</keyword>
<proteinExistence type="evidence at protein level"/>
<name>MEIS3_HUMAN</name>
<comment type="function">
    <text evidence="1">Transcriptional regulator which directly modulates PDPK1 expression, thus promoting survival of pancreatic beta-cells. Also regulates expression of NDFIP1, BNIP3, and CCNG1.</text>
</comment>
<comment type="interaction">
    <interactant intactId="EBI-18582591">
        <id>Q99687-3</id>
    </interactant>
    <interactant intactId="EBI-8624731">
        <id>P0C7T5</id>
        <label>ATXN1L</label>
    </interactant>
    <organismsDiffer>false</organismsDiffer>
    <experiments>3</experiments>
</comment>
<comment type="interaction">
    <interactant intactId="EBI-18582591">
        <id>Q99687-3</id>
    </interactant>
    <interactant intactId="EBI-744311">
        <id>Q8IYX3</id>
        <label>CCDC116</label>
    </interactant>
    <organismsDiffer>false</organismsDiffer>
    <experiments>3</experiments>
</comment>
<comment type="interaction">
    <interactant intactId="EBI-18582591">
        <id>Q99687-3</id>
    </interactant>
    <interactant intactId="EBI-744099">
        <id>Q9H0I2</id>
        <label>ENKD1</label>
    </interactant>
    <organismsDiffer>false</organismsDiffer>
    <experiments>3</experiments>
</comment>
<comment type="interaction">
    <interactant intactId="EBI-18582591">
        <id>Q99687-3</id>
    </interactant>
    <interactant intactId="EBI-1752811">
        <id>Q9BQ89</id>
        <label>FAM110A</label>
    </interactant>
    <organismsDiffer>false</organismsDiffer>
    <experiments>3</experiments>
</comment>
<comment type="interaction">
    <interactant intactId="EBI-18582591">
        <id>Q99687-3</id>
    </interactant>
    <interactant intactId="EBI-2558383">
        <id>Q8TC76</id>
        <label>FAM110B</label>
    </interactant>
    <organismsDiffer>false</organismsDiffer>
    <experiments>3</experiments>
</comment>
<comment type="interaction">
    <interactant intactId="EBI-18582591">
        <id>Q99687-3</id>
    </interactant>
    <interactant intactId="EBI-7225287">
        <id>Q96MY7</id>
        <label>FAM161B</label>
    </interactant>
    <organismsDiffer>false</organismsDiffer>
    <experiments>3</experiments>
</comment>
<comment type="interaction">
    <interactant intactId="EBI-18582591">
        <id>Q99687-3</id>
    </interactant>
    <interactant intactId="EBI-6658203">
        <id>Q86YD7</id>
        <label>FAM90A1</label>
    </interactant>
    <organismsDiffer>false</organismsDiffer>
    <experiments>3</experiments>
</comment>
<comment type="interaction">
    <interactant intactId="EBI-18582591">
        <id>Q99687-3</id>
    </interactant>
    <interactant intactId="EBI-740220">
        <id>O14964</id>
        <label>HGS</label>
    </interactant>
    <organismsDiffer>false</organismsDiffer>
    <experiments>3</experiments>
</comment>
<comment type="interaction">
    <interactant intactId="EBI-18582591">
        <id>Q99687-3</id>
    </interactant>
    <interactant intactId="EBI-12240836">
        <id>Q96HW7-3</id>
        <label>INTS4</label>
    </interactant>
    <organismsDiffer>false</organismsDiffer>
    <experiments>3</experiments>
</comment>
<comment type="interaction">
    <interactant intactId="EBI-18582591">
        <id>Q99687-3</id>
    </interactant>
    <interactant intactId="EBI-726510">
        <id>Q96BZ8</id>
        <label>LENG1</label>
    </interactant>
    <organismsDiffer>false</organismsDiffer>
    <experiments>3</experiments>
</comment>
<comment type="interaction">
    <interactant intactId="EBI-18582591">
        <id>Q99687-3</id>
    </interactant>
    <interactant intactId="EBI-11742507">
        <id>Q8TAP4-4</id>
        <label>LMO3</label>
    </interactant>
    <organismsDiffer>false</organismsDiffer>
    <experiments>3</experiments>
</comment>
<comment type="interaction">
    <interactant intactId="EBI-18582591">
        <id>Q99687-3</id>
    </interactant>
    <interactant intactId="EBI-11978579">
        <id>O95983-2</id>
        <label>MBD3</label>
    </interactant>
    <organismsDiffer>false</organismsDiffer>
    <experiments>3</experiments>
</comment>
<comment type="interaction">
    <interactant intactId="EBI-18582591">
        <id>Q99687-3</id>
    </interactant>
    <interactant intactId="EBI-3924422">
        <id>P48426</id>
        <label>PIP4K2A</label>
    </interactant>
    <organismsDiffer>false</organismsDiffer>
    <experiments>3</experiments>
</comment>
<comment type="interaction">
    <interactant intactId="EBI-18582591">
        <id>Q99687-3</id>
    </interactant>
    <interactant intactId="EBI-1567797">
        <id>Q8WWY3</id>
        <label>PRPF31</label>
    </interactant>
    <organismsDiffer>false</organismsDiffer>
    <experiments>3</experiments>
</comment>
<comment type="interaction">
    <interactant intactId="EBI-18582591">
        <id>Q99687-3</id>
    </interactant>
    <interactant intactId="EBI-11974061">
        <id>Q9UIG4</id>
        <label>PSORS1C2</label>
    </interactant>
    <organismsDiffer>false</organismsDiffer>
    <experiments>3</experiments>
</comment>
<comment type="interaction">
    <interactant intactId="EBI-18582591">
        <id>Q99687-3</id>
    </interactant>
    <interactant intactId="EBI-3921347">
        <id>P51687</id>
        <label>SUOX</label>
    </interactant>
    <organismsDiffer>false</organismsDiffer>
    <experiments>3</experiments>
</comment>
<comment type="interaction">
    <interactant intactId="EBI-18582591">
        <id>Q99687-3</id>
    </interactant>
    <interactant intactId="EBI-727338">
        <id>O95988</id>
        <label>TCL1B</label>
    </interactant>
    <organismsDiffer>false</organismsDiffer>
    <experiments>3</experiments>
</comment>
<comment type="interaction">
    <interactant intactId="EBI-18582591">
        <id>Q99687-3</id>
    </interactant>
    <interactant intactId="EBI-11741437">
        <id>Q08117-2</id>
        <label>TLE5</label>
    </interactant>
    <organismsDiffer>false</organismsDiffer>
    <experiments>3</experiments>
</comment>
<comment type="interaction">
    <interactant intactId="EBI-18582591">
        <id>Q99687-3</id>
    </interactant>
    <interactant intactId="EBI-10241197">
        <id>Q3SY00</id>
        <label>TSGA10IP</label>
    </interactant>
    <organismsDiffer>false</organismsDiffer>
    <experiments>3</experiments>
</comment>
<comment type="interaction">
    <interactant intactId="EBI-18582591">
        <id>Q99687-3</id>
    </interactant>
    <interactant intactId="EBI-11980193">
        <id>Q14119</id>
        <label>VEZF1</label>
    </interactant>
    <organismsDiffer>false</organismsDiffer>
    <experiments>3</experiments>
</comment>
<comment type="interaction">
    <interactant intactId="EBI-18582591">
        <id>Q99687-3</id>
    </interactant>
    <interactant intactId="EBI-740727">
        <id>Q8TAU3</id>
        <label>ZNF417</label>
    </interactant>
    <organismsDiffer>false</organismsDiffer>
    <experiments>3</experiments>
</comment>
<comment type="subcellular location">
    <subcellularLocation>
        <location evidence="1">Nucleus</location>
    </subcellularLocation>
</comment>
<comment type="alternative products">
    <event type="alternative splicing"/>
    <isoform>
        <id>Q99687-1</id>
        <name>1</name>
        <sequence type="displayed"/>
    </isoform>
    <isoform>
        <id>Q99687-2</id>
        <name>2</name>
        <sequence type="described" ref="VSP_012893"/>
    </isoform>
    <isoform>
        <id>Q99687-3</id>
        <name>3</name>
        <sequence type="described" ref="VSP_012892"/>
    </isoform>
</comment>
<comment type="similarity">
    <text evidence="7">Belongs to the TALE/MEIS homeobox family.</text>
</comment>
<reference key="1">
    <citation type="journal article" date="2004" name="Nat. Genet.">
        <title>Complete sequencing and characterization of 21,243 full-length human cDNAs.</title>
        <authorList>
            <person name="Ota T."/>
            <person name="Suzuki Y."/>
            <person name="Nishikawa T."/>
            <person name="Otsuki T."/>
            <person name="Sugiyama T."/>
            <person name="Irie R."/>
            <person name="Wakamatsu A."/>
            <person name="Hayashi K."/>
            <person name="Sato H."/>
            <person name="Nagai K."/>
            <person name="Kimura K."/>
            <person name="Makita H."/>
            <person name="Sekine M."/>
            <person name="Obayashi M."/>
            <person name="Nishi T."/>
            <person name="Shibahara T."/>
            <person name="Tanaka T."/>
            <person name="Ishii S."/>
            <person name="Yamamoto J."/>
            <person name="Saito K."/>
            <person name="Kawai Y."/>
            <person name="Isono Y."/>
            <person name="Nakamura Y."/>
            <person name="Nagahari K."/>
            <person name="Murakami K."/>
            <person name="Yasuda T."/>
            <person name="Iwayanagi T."/>
            <person name="Wagatsuma M."/>
            <person name="Shiratori A."/>
            <person name="Sudo H."/>
            <person name="Hosoiri T."/>
            <person name="Kaku Y."/>
            <person name="Kodaira H."/>
            <person name="Kondo H."/>
            <person name="Sugawara M."/>
            <person name="Takahashi M."/>
            <person name="Kanda K."/>
            <person name="Yokoi T."/>
            <person name="Furuya T."/>
            <person name="Kikkawa E."/>
            <person name="Omura Y."/>
            <person name="Abe K."/>
            <person name="Kamihara K."/>
            <person name="Katsuta N."/>
            <person name="Sato K."/>
            <person name="Tanikawa M."/>
            <person name="Yamazaki M."/>
            <person name="Ninomiya K."/>
            <person name="Ishibashi T."/>
            <person name="Yamashita H."/>
            <person name="Murakawa K."/>
            <person name="Fujimori K."/>
            <person name="Tanai H."/>
            <person name="Kimata M."/>
            <person name="Watanabe M."/>
            <person name="Hiraoka S."/>
            <person name="Chiba Y."/>
            <person name="Ishida S."/>
            <person name="Ono Y."/>
            <person name="Takiguchi S."/>
            <person name="Watanabe S."/>
            <person name="Yosida M."/>
            <person name="Hotuta T."/>
            <person name="Kusano J."/>
            <person name="Kanehori K."/>
            <person name="Takahashi-Fujii A."/>
            <person name="Hara H."/>
            <person name="Tanase T.-O."/>
            <person name="Nomura Y."/>
            <person name="Togiya S."/>
            <person name="Komai F."/>
            <person name="Hara R."/>
            <person name="Takeuchi K."/>
            <person name="Arita M."/>
            <person name="Imose N."/>
            <person name="Musashino K."/>
            <person name="Yuuki H."/>
            <person name="Oshima A."/>
            <person name="Sasaki N."/>
            <person name="Aotsuka S."/>
            <person name="Yoshikawa Y."/>
            <person name="Matsunawa H."/>
            <person name="Ichihara T."/>
            <person name="Shiohata N."/>
            <person name="Sano S."/>
            <person name="Moriya S."/>
            <person name="Momiyama H."/>
            <person name="Satoh N."/>
            <person name="Takami S."/>
            <person name="Terashima Y."/>
            <person name="Suzuki O."/>
            <person name="Nakagawa S."/>
            <person name="Senoh A."/>
            <person name="Mizoguchi H."/>
            <person name="Goto Y."/>
            <person name="Shimizu F."/>
            <person name="Wakebe H."/>
            <person name="Hishigaki H."/>
            <person name="Watanabe T."/>
            <person name="Sugiyama A."/>
            <person name="Takemoto M."/>
            <person name="Kawakami B."/>
            <person name="Yamazaki M."/>
            <person name="Watanabe K."/>
            <person name="Kumagai A."/>
            <person name="Itakura S."/>
            <person name="Fukuzumi Y."/>
            <person name="Fujimori Y."/>
            <person name="Komiyama M."/>
            <person name="Tashiro H."/>
            <person name="Tanigami A."/>
            <person name="Fujiwara T."/>
            <person name="Ono T."/>
            <person name="Yamada K."/>
            <person name="Fujii Y."/>
            <person name="Ozaki K."/>
            <person name="Hirao M."/>
            <person name="Ohmori Y."/>
            <person name="Kawabata A."/>
            <person name="Hikiji T."/>
            <person name="Kobatake N."/>
            <person name="Inagaki H."/>
            <person name="Ikema Y."/>
            <person name="Okamoto S."/>
            <person name="Okitani R."/>
            <person name="Kawakami T."/>
            <person name="Noguchi S."/>
            <person name="Itoh T."/>
            <person name="Shigeta K."/>
            <person name="Senba T."/>
            <person name="Matsumura K."/>
            <person name="Nakajima Y."/>
            <person name="Mizuno T."/>
            <person name="Morinaga M."/>
            <person name="Sasaki M."/>
            <person name="Togashi T."/>
            <person name="Oyama M."/>
            <person name="Hata H."/>
            <person name="Watanabe M."/>
            <person name="Komatsu T."/>
            <person name="Mizushima-Sugano J."/>
            <person name="Satoh T."/>
            <person name="Shirai Y."/>
            <person name="Takahashi Y."/>
            <person name="Nakagawa K."/>
            <person name="Okumura K."/>
            <person name="Nagase T."/>
            <person name="Nomura N."/>
            <person name="Kikuchi H."/>
            <person name="Masuho Y."/>
            <person name="Yamashita R."/>
            <person name="Nakai K."/>
            <person name="Yada T."/>
            <person name="Nakamura Y."/>
            <person name="Ohara O."/>
            <person name="Isogai T."/>
            <person name="Sugano S."/>
        </authorList>
    </citation>
    <scope>NUCLEOTIDE SEQUENCE [LARGE SCALE MRNA] (ISOFORM 2)</scope>
    <source>
        <tissue>Hippocampus</tissue>
    </source>
</reference>
<reference key="2">
    <citation type="journal article" date="2007" name="BMC Genomics">
        <title>The full-ORF clone resource of the German cDNA consortium.</title>
        <authorList>
            <person name="Bechtel S."/>
            <person name="Rosenfelder H."/>
            <person name="Duda A."/>
            <person name="Schmidt C.P."/>
            <person name="Ernst U."/>
            <person name="Wellenreuther R."/>
            <person name="Mehrle A."/>
            <person name="Schuster C."/>
            <person name="Bahr A."/>
            <person name="Bloecker H."/>
            <person name="Heubner D."/>
            <person name="Hoerlein A."/>
            <person name="Michel G."/>
            <person name="Wedler H."/>
            <person name="Koehrer K."/>
            <person name="Ottenwaelder B."/>
            <person name="Poustka A."/>
            <person name="Wiemann S."/>
            <person name="Schupp I."/>
        </authorList>
    </citation>
    <scope>NUCLEOTIDE SEQUENCE [LARGE SCALE MRNA] (ISOFORM 1)</scope>
    <source>
        <tissue>Brain</tissue>
    </source>
</reference>
<reference key="3">
    <citation type="submission" date="2005-07" db="EMBL/GenBank/DDBJ databases">
        <authorList>
            <person name="Mural R.J."/>
            <person name="Istrail S."/>
            <person name="Sutton G.G."/>
            <person name="Florea L."/>
            <person name="Halpern A.L."/>
            <person name="Mobarry C.M."/>
            <person name="Lippert R."/>
            <person name="Walenz B."/>
            <person name="Shatkay H."/>
            <person name="Dew I."/>
            <person name="Miller J.R."/>
            <person name="Flanigan M.J."/>
            <person name="Edwards N.J."/>
            <person name="Bolanos R."/>
            <person name="Fasulo D."/>
            <person name="Halldorsson B.V."/>
            <person name="Hannenhalli S."/>
            <person name="Turner R."/>
            <person name="Yooseph S."/>
            <person name="Lu F."/>
            <person name="Nusskern D.R."/>
            <person name="Shue B.C."/>
            <person name="Zheng X.H."/>
            <person name="Zhong F."/>
            <person name="Delcher A.L."/>
            <person name="Huson D.H."/>
            <person name="Kravitz S.A."/>
            <person name="Mouchard L."/>
            <person name="Reinert K."/>
            <person name="Remington K.A."/>
            <person name="Clark A.G."/>
            <person name="Waterman M.S."/>
            <person name="Eichler E.E."/>
            <person name="Adams M.D."/>
            <person name="Hunkapiller M.W."/>
            <person name="Myers E.W."/>
            <person name="Venter J.C."/>
        </authorList>
    </citation>
    <scope>NUCLEOTIDE SEQUENCE [LARGE SCALE GENOMIC DNA]</scope>
</reference>
<reference key="4">
    <citation type="journal article" date="2004" name="Genome Res.">
        <title>The status, quality, and expansion of the NIH full-length cDNA project: the Mammalian Gene Collection (MGC).</title>
        <authorList>
            <consortium name="The MGC Project Team"/>
        </authorList>
    </citation>
    <scope>NUCLEOTIDE SEQUENCE [LARGE SCALE MRNA] (ISOFORMS 2 AND 3)</scope>
    <source>
        <tissue>Salivary gland</tissue>
        <tissue>Testis</tissue>
    </source>
</reference>
<reference key="5">
    <citation type="journal article" date="1997" name="Genome Res.">
        <title>Identification of a conserved family of Meis1-related homeobox genes.</title>
        <authorList>
            <person name="Steelman S."/>
            <person name="Moskow J.J."/>
            <person name="Muzynski K."/>
            <person name="North C."/>
            <person name="Druck T."/>
            <person name="Montgomery J.C."/>
            <person name="Huebner K."/>
            <person name="Daar I.O."/>
            <person name="Buchberg A.M."/>
        </authorList>
    </citation>
    <scope>NUCLEOTIDE SEQUENCE [MRNA] OF 168-375 (ISOFORMS 1/3)</scope>
</reference>
<gene>
    <name type="primary">MEIS3</name>
    <name type="synonym">MRG2</name>
</gene>